<comment type="function">
    <text evidence="2">Binds with high affinity to muscular (alpha-1/CHRNA1) and neuronal (alpha-7/CHRNA7) nicotinic acetylcholine receptor (nAChR) and inhibits acetylcholine from binding to the receptor, thereby impairing neuromuscular and neuronal transmission.</text>
</comment>
<comment type="subcellular location">
    <subcellularLocation>
        <location evidence="1">Secreted</location>
    </subcellularLocation>
</comment>
<comment type="tissue specificity">
    <text evidence="3">Expressed by the venom gland.</text>
</comment>
<comment type="similarity">
    <text evidence="3">Belongs to the three-finger toxin family. Long-chain subfamily. Type II alpha-neurotoxin sub-subfamily.</text>
</comment>
<proteinExistence type="inferred from homology"/>
<accession>A8S6A8</accession>
<organism>
    <name type="scientific">Austrelaps superbus</name>
    <name type="common">Lowland copperhead snake</name>
    <name type="synonym">Hoplocephalus superbus</name>
    <dbReference type="NCBI Taxonomy" id="29156"/>
    <lineage>
        <taxon>Eukaryota</taxon>
        <taxon>Metazoa</taxon>
        <taxon>Chordata</taxon>
        <taxon>Craniata</taxon>
        <taxon>Vertebrata</taxon>
        <taxon>Euteleostomi</taxon>
        <taxon>Lepidosauria</taxon>
        <taxon>Squamata</taxon>
        <taxon>Bifurcata</taxon>
        <taxon>Unidentata</taxon>
        <taxon>Episquamata</taxon>
        <taxon>Toxicofera</taxon>
        <taxon>Serpentes</taxon>
        <taxon>Colubroidea</taxon>
        <taxon>Elapidae</taxon>
        <taxon>Hydrophiinae</taxon>
        <taxon>Austrelaps</taxon>
    </lineage>
</organism>
<feature type="signal peptide" evidence="1">
    <location>
        <begin position="1"/>
        <end position="21"/>
    </location>
</feature>
<feature type="chain" id="PRO_5000282345" description="Long neurotoxin 1">
    <location>
        <begin position="22"/>
        <end position="90"/>
    </location>
</feature>
<feature type="disulfide bond" evidence="1">
    <location>
        <begin position="24"/>
        <end position="42"/>
    </location>
</feature>
<feature type="disulfide bond" evidence="1">
    <location>
        <begin position="35"/>
        <end position="63"/>
    </location>
</feature>
<feature type="disulfide bond" evidence="1">
    <location>
        <begin position="48"/>
        <end position="52"/>
    </location>
</feature>
<feature type="disulfide bond" evidence="1">
    <location>
        <begin position="67"/>
        <end position="78"/>
    </location>
</feature>
<feature type="disulfide bond" evidence="1">
    <location>
        <begin position="79"/>
        <end position="84"/>
    </location>
</feature>
<sequence>MKTLLLTLVVVTIVCLDVGNSFSCYKTPDVKSEPCAPGENLCYTKTWCDRFCSIRGKVIELGCAATCPPAEPRKDITCCSTDNCNPHPAH</sequence>
<name>3L21_AUSSU</name>
<dbReference type="EMBL" id="EF599318">
    <property type="protein sequence ID" value="ABW24175.1"/>
    <property type="molecule type" value="mRNA"/>
</dbReference>
<dbReference type="SMR" id="A8S6A8"/>
<dbReference type="GO" id="GO:0005576">
    <property type="term" value="C:extracellular region"/>
    <property type="evidence" value="ECO:0007669"/>
    <property type="project" value="UniProtKB-SubCell"/>
</dbReference>
<dbReference type="GO" id="GO:0030550">
    <property type="term" value="F:acetylcholine receptor inhibitor activity"/>
    <property type="evidence" value="ECO:0007669"/>
    <property type="project" value="UniProtKB-KW"/>
</dbReference>
<dbReference type="GO" id="GO:0099106">
    <property type="term" value="F:ion channel regulator activity"/>
    <property type="evidence" value="ECO:0007669"/>
    <property type="project" value="UniProtKB-KW"/>
</dbReference>
<dbReference type="GO" id="GO:0090729">
    <property type="term" value="F:toxin activity"/>
    <property type="evidence" value="ECO:0007669"/>
    <property type="project" value="UniProtKB-KW"/>
</dbReference>
<dbReference type="CDD" id="cd00206">
    <property type="entry name" value="TFP_snake_toxin"/>
    <property type="match status" value="1"/>
</dbReference>
<dbReference type="Gene3D" id="2.10.60.10">
    <property type="entry name" value="CD59"/>
    <property type="match status" value="1"/>
</dbReference>
<dbReference type="InterPro" id="IPR003571">
    <property type="entry name" value="Snake_3FTx"/>
</dbReference>
<dbReference type="InterPro" id="IPR045860">
    <property type="entry name" value="Snake_toxin-like_sf"/>
</dbReference>
<dbReference type="InterPro" id="IPR018354">
    <property type="entry name" value="Snake_toxin_con_site"/>
</dbReference>
<dbReference type="InterPro" id="IPR054131">
    <property type="entry name" value="Toxin_cobra-type"/>
</dbReference>
<dbReference type="Pfam" id="PF21947">
    <property type="entry name" value="Toxin_cobra-type"/>
    <property type="match status" value="1"/>
</dbReference>
<dbReference type="SUPFAM" id="SSF57302">
    <property type="entry name" value="Snake toxin-like"/>
    <property type="match status" value="1"/>
</dbReference>
<dbReference type="PROSITE" id="PS00272">
    <property type="entry name" value="SNAKE_TOXIN"/>
    <property type="match status" value="1"/>
</dbReference>
<evidence type="ECO:0000250" key="1"/>
<evidence type="ECO:0000250" key="2">
    <source>
        <dbReference type="UniProtKB" id="P60615"/>
    </source>
</evidence>
<evidence type="ECO:0000305" key="3"/>
<protein>
    <recommendedName>
        <fullName>Long neurotoxin 1</fullName>
        <shortName>LNTX-1</shortName>
    </recommendedName>
</protein>
<keyword id="KW-0008">Acetylcholine receptor inhibiting toxin</keyword>
<keyword id="KW-1015">Disulfide bond</keyword>
<keyword id="KW-0872">Ion channel impairing toxin</keyword>
<keyword id="KW-0528">Neurotoxin</keyword>
<keyword id="KW-0629">Postsynaptic neurotoxin</keyword>
<keyword id="KW-0964">Secreted</keyword>
<keyword id="KW-0732">Signal</keyword>
<keyword id="KW-0800">Toxin</keyword>
<reference key="1">
    <citation type="journal article" date="2007" name="Cell. Mol. Life Sci.">
        <title>Distinct activities of novel neurotoxins from Australian venomous snakes for nicotinic acetylcholine receptors.</title>
        <authorList>
            <person name="St Pierre L."/>
            <person name="Fischer H."/>
            <person name="Adams D.J."/>
            <person name="Schenning M."/>
            <person name="Lavidis N."/>
            <person name="de Jersey J."/>
            <person name="Masci P.P."/>
            <person name="Lavin M.F."/>
        </authorList>
    </citation>
    <scope>NUCLEOTIDE SEQUENCE [MRNA]</scope>
    <source>
        <tissue>Venom gland</tissue>
    </source>
</reference>